<sequence length="808" mass="90746">MFFVSAVKDYLEVLSNITDTLTGTLSFDTILKSTLLYLATSTKVFVSYIISFEWFRNISYLPIIAPDLSKAILRENYVLDTPLSNLFTFFDVPSYTSNKFVLGLLNSFFLAIPISVAHLIAFRRFIIQGLPAGLTAGLGIISGQVCFIGAVLFGVRSLVIPWFATEPLSYLIGIFLILTIIYDMAHESRIRPINLSETPLLLKIFGLSFLLTWTEQSSVFQYLANVTLGNQATLLETTTVKTDGQFLLTHISYLLGLTAGNILFTLLFGFLLLQLINQVVKFSNLPYSLCVRNLNFGILTFTLALSITSIPYYGFDYLLTAPLGFVSQDQSLEKVSLRTNLPDAIGYLGQLSESKYLDTEVTPFDRGTYLTDFATPKTYESLNYQGEYFWNSRLDRSASVTQKYRALEFNPKKDSESEIPEQVGALSPDSQANSVSPGQELSENELGLGTTKTNKQVLLNKLDQNFSRNSNPSYANLLSEVLDYSFNESFFTTSASNAPQEVALQKIEFNIKQKYYSNPLYKALLNFDIDRFISHQPVAQRLNANQEKQLFENRLILSTYYDTLRDYRLLPYSSEFQTYFNGPKSYANRVYNQQFKGTLNVVRRLFAIDIEGDSAGRSTSNSVLKFDQPLFNNFKDSSLSVYHEELNPEAVRPTKKSPFLENTSPTPFYAGWDNIQRKFIVTNRLLAREAAGNEINRASRNISSATSALTAKDYTSLGDTVKLKFTSWPDSSSKGGNSKGVNQLSLPFISVPQEKFTQVVSSLGLEDDDFGSASSTLKLPPNIKKMFEVCQISIPEVFPPKRGGFIWP</sequence>
<accession>Q20EU8</accession>
<name>YCF78_OLTVI</name>
<comment type="subcellular location">
    <subcellularLocation>
        <location evidence="3">Plastid</location>
        <location evidence="3">Chloroplast membrane</location>
        <topology evidence="3">Multi-pass membrane protein</topology>
    </subcellularLocation>
</comment>
<comment type="similarity">
    <text evidence="3">Belongs to the ycf78 family.</text>
</comment>
<dbReference type="EMBL" id="DQ291132">
    <property type="protein sequence ID" value="ABB81965.1"/>
    <property type="molecule type" value="Genomic_DNA"/>
</dbReference>
<dbReference type="RefSeq" id="YP_635897.1">
    <property type="nucleotide sequence ID" value="NC_008099.1"/>
</dbReference>
<dbReference type="SMR" id="Q20EU8"/>
<dbReference type="GeneID" id="4100103"/>
<dbReference type="GO" id="GO:0031969">
    <property type="term" value="C:chloroplast membrane"/>
    <property type="evidence" value="ECO:0007669"/>
    <property type="project" value="UniProtKB-SubCell"/>
</dbReference>
<feature type="chain" id="PRO_0000293982" description="Uncharacterized membrane protein ycf78">
    <location>
        <begin position="1"/>
        <end position="808"/>
    </location>
</feature>
<feature type="transmembrane region" description="Helical" evidence="1">
    <location>
        <begin position="35"/>
        <end position="55"/>
    </location>
</feature>
<feature type="transmembrane region" description="Helical" evidence="1">
    <location>
        <begin position="100"/>
        <end position="120"/>
    </location>
</feature>
<feature type="transmembrane region" description="Helical" evidence="1">
    <location>
        <begin position="135"/>
        <end position="155"/>
    </location>
</feature>
<feature type="transmembrane region" description="Helical" evidence="1">
    <location>
        <begin position="158"/>
        <end position="178"/>
    </location>
</feature>
<feature type="transmembrane region" description="Helical" evidence="1">
    <location>
        <begin position="193"/>
        <end position="213"/>
    </location>
</feature>
<feature type="transmembrane region" description="Helical" evidence="1">
    <location>
        <begin position="253"/>
        <end position="273"/>
    </location>
</feature>
<feature type="transmembrane region" description="Helical" evidence="1">
    <location>
        <begin position="295"/>
        <end position="315"/>
    </location>
</feature>
<feature type="region of interest" description="Disordered" evidence="2">
    <location>
        <begin position="411"/>
        <end position="447"/>
    </location>
</feature>
<feature type="compositionally biased region" description="Polar residues" evidence="2">
    <location>
        <begin position="428"/>
        <end position="441"/>
    </location>
</feature>
<evidence type="ECO:0000255" key="1"/>
<evidence type="ECO:0000256" key="2">
    <source>
        <dbReference type="SAM" id="MobiDB-lite"/>
    </source>
</evidence>
<evidence type="ECO:0000305" key="3"/>
<reference key="1">
    <citation type="journal article" date="2006" name="BMC Biol.">
        <title>The complete chloroplast DNA sequence of the green alga Oltmannsiellopsis viridis reveals a distinctive quadripartite architecture in the chloroplast genome of early diverging ulvophytes.</title>
        <authorList>
            <person name="Pombert J.-F."/>
            <person name="Lemieux C."/>
            <person name="Turmel M."/>
        </authorList>
    </citation>
    <scope>NUCLEOTIDE SEQUENCE [LARGE SCALE GENOMIC DNA]</scope>
</reference>
<proteinExistence type="inferred from homology"/>
<protein>
    <recommendedName>
        <fullName>Uncharacterized membrane protein ycf78</fullName>
    </recommendedName>
    <alternativeName>
        <fullName>RF1</fullName>
    </alternativeName>
    <alternativeName>
        <fullName>ycf1</fullName>
    </alternativeName>
</protein>
<gene>
    <name type="primary">ycf78</name>
    <name type="synonym">ycf1</name>
</gene>
<keyword id="KW-0150">Chloroplast</keyword>
<keyword id="KW-0472">Membrane</keyword>
<keyword id="KW-0934">Plastid</keyword>
<keyword id="KW-0812">Transmembrane</keyword>
<keyword id="KW-1133">Transmembrane helix</keyword>
<organism>
    <name type="scientific">Oltmannsiellopsis viridis</name>
    <name type="common">Marine flagellate</name>
    <name type="synonym">Oltmannsiella viridis</name>
    <dbReference type="NCBI Taxonomy" id="51324"/>
    <lineage>
        <taxon>Eukaryota</taxon>
        <taxon>Viridiplantae</taxon>
        <taxon>Chlorophyta</taxon>
        <taxon>Ulvophyceae</taxon>
        <taxon>Oltmannsiellopsidales</taxon>
        <taxon>Oltmannsiellopsidaceae</taxon>
        <taxon>Oltmannsiellopsis</taxon>
    </lineage>
</organism>
<geneLocation type="chloroplast"/>